<accession>B1HVS4</accession>
<sequence>MPFITQVYAREVLDSRGNPTVEVEVFTESGAFGRSIVPSGASTGEYEAVELRDGDKSRYLGKGVLKAVENVNTIIAQELEGNYSVLDQVVIDKALIELDGTENKGKLGANAILGVSMAVAHAAADYLDVPLYQYLGGFNSKQLPVPMMNILNGGAHADNNVDIQEFMVMPVGAESFRHALRIGAEIFHNLKAVLKDKGYNTAVGDEGGFAPNLGSNEEAITVILEAIEKAGYKPGEEVKLAMDVASSELFNKEDGKYHLDGEGVVKTSEEMVDWYEELTNKYPIISIEDGLDENDWAGHKLLTERIGSRVQLVGDDLFVTNTKKLAAGIEQGVGNSILIKVNQIGTLTETFEAIEMAKRAGYTAVISHRSGESEDATIADIAVATNAGQIKTGAPSRTDRVAKYNQLLRIEDQLGSTAEYLGLKSFYNLK</sequence>
<keyword id="KW-0963">Cytoplasm</keyword>
<keyword id="KW-0324">Glycolysis</keyword>
<keyword id="KW-0456">Lyase</keyword>
<keyword id="KW-0460">Magnesium</keyword>
<keyword id="KW-0479">Metal-binding</keyword>
<keyword id="KW-0964">Secreted</keyword>
<evidence type="ECO:0000255" key="1">
    <source>
        <dbReference type="HAMAP-Rule" id="MF_00318"/>
    </source>
</evidence>
<comment type="function">
    <text evidence="1">Catalyzes the reversible conversion of 2-phosphoglycerate (2-PG) into phosphoenolpyruvate (PEP). It is essential for the degradation of carbohydrates via glycolysis.</text>
</comment>
<comment type="catalytic activity">
    <reaction evidence="1">
        <text>(2R)-2-phosphoglycerate = phosphoenolpyruvate + H2O</text>
        <dbReference type="Rhea" id="RHEA:10164"/>
        <dbReference type="ChEBI" id="CHEBI:15377"/>
        <dbReference type="ChEBI" id="CHEBI:58289"/>
        <dbReference type="ChEBI" id="CHEBI:58702"/>
        <dbReference type="EC" id="4.2.1.11"/>
    </reaction>
</comment>
<comment type="cofactor">
    <cofactor evidence="1">
        <name>Mg(2+)</name>
        <dbReference type="ChEBI" id="CHEBI:18420"/>
    </cofactor>
    <text evidence="1">Binds a second Mg(2+) ion via substrate during catalysis.</text>
</comment>
<comment type="pathway">
    <text evidence="1">Carbohydrate degradation; glycolysis; pyruvate from D-glyceraldehyde 3-phosphate: step 4/5.</text>
</comment>
<comment type="subcellular location">
    <subcellularLocation>
        <location evidence="1">Cytoplasm</location>
    </subcellularLocation>
    <subcellularLocation>
        <location evidence="1">Secreted</location>
    </subcellularLocation>
    <subcellularLocation>
        <location evidence="1">Cell surface</location>
    </subcellularLocation>
    <text evidence="1">Fractions of enolase are present in both the cytoplasm and on the cell surface.</text>
</comment>
<comment type="similarity">
    <text evidence="1">Belongs to the enolase family.</text>
</comment>
<protein>
    <recommendedName>
        <fullName evidence="1">Enolase</fullName>
        <ecNumber evidence="1">4.2.1.11</ecNumber>
    </recommendedName>
    <alternativeName>
        <fullName evidence="1">2-phospho-D-glycerate hydro-lyase</fullName>
    </alternativeName>
    <alternativeName>
        <fullName evidence="1">2-phosphoglycerate dehydratase</fullName>
    </alternativeName>
</protein>
<dbReference type="EC" id="4.2.1.11" evidence="1"/>
<dbReference type="EMBL" id="CP000817">
    <property type="protein sequence ID" value="ACA38093.1"/>
    <property type="molecule type" value="Genomic_DNA"/>
</dbReference>
<dbReference type="RefSeq" id="WP_012292248.1">
    <property type="nucleotide sequence ID" value="NC_010382.1"/>
</dbReference>
<dbReference type="SMR" id="B1HVS4"/>
<dbReference type="EnsemblBacteria" id="ACA38093">
    <property type="protein sequence ID" value="ACA38093"/>
    <property type="gene ID" value="Bsph_0468"/>
</dbReference>
<dbReference type="KEGG" id="lsp:Bsph_0468"/>
<dbReference type="HOGENOM" id="CLU_031223_2_1_9"/>
<dbReference type="UniPathway" id="UPA00109">
    <property type="reaction ID" value="UER00187"/>
</dbReference>
<dbReference type="Proteomes" id="UP000002164">
    <property type="component" value="Chromosome"/>
</dbReference>
<dbReference type="GO" id="GO:0009986">
    <property type="term" value="C:cell surface"/>
    <property type="evidence" value="ECO:0007669"/>
    <property type="project" value="UniProtKB-SubCell"/>
</dbReference>
<dbReference type="GO" id="GO:0005576">
    <property type="term" value="C:extracellular region"/>
    <property type="evidence" value="ECO:0007669"/>
    <property type="project" value="UniProtKB-SubCell"/>
</dbReference>
<dbReference type="GO" id="GO:0000015">
    <property type="term" value="C:phosphopyruvate hydratase complex"/>
    <property type="evidence" value="ECO:0007669"/>
    <property type="project" value="InterPro"/>
</dbReference>
<dbReference type="GO" id="GO:0000287">
    <property type="term" value="F:magnesium ion binding"/>
    <property type="evidence" value="ECO:0007669"/>
    <property type="project" value="UniProtKB-UniRule"/>
</dbReference>
<dbReference type="GO" id="GO:0004634">
    <property type="term" value="F:phosphopyruvate hydratase activity"/>
    <property type="evidence" value="ECO:0007669"/>
    <property type="project" value="UniProtKB-UniRule"/>
</dbReference>
<dbReference type="GO" id="GO:0006096">
    <property type="term" value="P:glycolytic process"/>
    <property type="evidence" value="ECO:0007669"/>
    <property type="project" value="UniProtKB-UniRule"/>
</dbReference>
<dbReference type="CDD" id="cd03313">
    <property type="entry name" value="enolase"/>
    <property type="match status" value="1"/>
</dbReference>
<dbReference type="FunFam" id="3.20.20.120:FF:000001">
    <property type="entry name" value="Enolase"/>
    <property type="match status" value="1"/>
</dbReference>
<dbReference type="FunFam" id="3.30.390.10:FF:000001">
    <property type="entry name" value="Enolase"/>
    <property type="match status" value="1"/>
</dbReference>
<dbReference type="Gene3D" id="3.20.20.120">
    <property type="entry name" value="Enolase-like C-terminal domain"/>
    <property type="match status" value="1"/>
</dbReference>
<dbReference type="Gene3D" id="3.30.390.10">
    <property type="entry name" value="Enolase-like, N-terminal domain"/>
    <property type="match status" value="1"/>
</dbReference>
<dbReference type="HAMAP" id="MF_00318">
    <property type="entry name" value="Enolase"/>
    <property type="match status" value="1"/>
</dbReference>
<dbReference type="InterPro" id="IPR000941">
    <property type="entry name" value="Enolase"/>
</dbReference>
<dbReference type="InterPro" id="IPR036849">
    <property type="entry name" value="Enolase-like_C_sf"/>
</dbReference>
<dbReference type="InterPro" id="IPR029017">
    <property type="entry name" value="Enolase-like_N"/>
</dbReference>
<dbReference type="InterPro" id="IPR020810">
    <property type="entry name" value="Enolase_C"/>
</dbReference>
<dbReference type="InterPro" id="IPR020809">
    <property type="entry name" value="Enolase_CS"/>
</dbReference>
<dbReference type="InterPro" id="IPR020811">
    <property type="entry name" value="Enolase_N"/>
</dbReference>
<dbReference type="NCBIfam" id="TIGR01060">
    <property type="entry name" value="eno"/>
    <property type="match status" value="1"/>
</dbReference>
<dbReference type="PANTHER" id="PTHR11902">
    <property type="entry name" value="ENOLASE"/>
    <property type="match status" value="1"/>
</dbReference>
<dbReference type="PANTHER" id="PTHR11902:SF1">
    <property type="entry name" value="ENOLASE"/>
    <property type="match status" value="1"/>
</dbReference>
<dbReference type="Pfam" id="PF00113">
    <property type="entry name" value="Enolase_C"/>
    <property type="match status" value="1"/>
</dbReference>
<dbReference type="Pfam" id="PF03952">
    <property type="entry name" value="Enolase_N"/>
    <property type="match status" value="1"/>
</dbReference>
<dbReference type="PIRSF" id="PIRSF001400">
    <property type="entry name" value="Enolase"/>
    <property type="match status" value="1"/>
</dbReference>
<dbReference type="PRINTS" id="PR00148">
    <property type="entry name" value="ENOLASE"/>
</dbReference>
<dbReference type="SFLD" id="SFLDS00001">
    <property type="entry name" value="Enolase"/>
    <property type="match status" value="1"/>
</dbReference>
<dbReference type="SFLD" id="SFLDF00002">
    <property type="entry name" value="enolase"/>
    <property type="match status" value="1"/>
</dbReference>
<dbReference type="SMART" id="SM01192">
    <property type="entry name" value="Enolase_C"/>
    <property type="match status" value="1"/>
</dbReference>
<dbReference type="SMART" id="SM01193">
    <property type="entry name" value="Enolase_N"/>
    <property type="match status" value="1"/>
</dbReference>
<dbReference type="SUPFAM" id="SSF51604">
    <property type="entry name" value="Enolase C-terminal domain-like"/>
    <property type="match status" value="1"/>
</dbReference>
<dbReference type="SUPFAM" id="SSF54826">
    <property type="entry name" value="Enolase N-terminal domain-like"/>
    <property type="match status" value="1"/>
</dbReference>
<dbReference type="PROSITE" id="PS00164">
    <property type="entry name" value="ENOLASE"/>
    <property type="match status" value="1"/>
</dbReference>
<feature type="chain" id="PRO_1000115882" description="Enolase">
    <location>
        <begin position="1"/>
        <end position="430"/>
    </location>
</feature>
<feature type="active site" description="Proton donor" evidence="1">
    <location>
        <position position="206"/>
    </location>
</feature>
<feature type="active site" description="Proton acceptor" evidence="1">
    <location>
        <position position="340"/>
    </location>
</feature>
<feature type="binding site" evidence="1">
    <location>
        <position position="164"/>
    </location>
    <ligand>
        <name>(2R)-2-phosphoglycerate</name>
        <dbReference type="ChEBI" id="CHEBI:58289"/>
    </ligand>
</feature>
<feature type="binding site" evidence="1">
    <location>
        <position position="243"/>
    </location>
    <ligand>
        <name>Mg(2+)</name>
        <dbReference type="ChEBI" id="CHEBI:18420"/>
    </ligand>
</feature>
<feature type="binding site" evidence="1">
    <location>
        <position position="288"/>
    </location>
    <ligand>
        <name>Mg(2+)</name>
        <dbReference type="ChEBI" id="CHEBI:18420"/>
    </ligand>
</feature>
<feature type="binding site" evidence="1">
    <location>
        <position position="315"/>
    </location>
    <ligand>
        <name>Mg(2+)</name>
        <dbReference type="ChEBI" id="CHEBI:18420"/>
    </ligand>
</feature>
<feature type="binding site" evidence="1">
    <location>
        <position position="340"/>
    </location>
    <ligand>
        <name>(2R)-2-phosphoglycerate</name>
        <dbReference type="ChEBI" id="CHEBI:58289"/>
    </ligand>
</feature>
<feature type="binding site" evidence="1">
    <location>
        <position position="369"/>
    </location>
    <ligand>
        <name>(2R)-2-phosphoglycerate</name>
        <dbReference type="ChEBI" id="CHEBI:58289"/>
    </ligand>
</feature>
<feature type="binding site" evidence="1">
    <location>
        <position position="370"/>
    </location>
    <ligand>
        <name>(2R)-2-phosphoglycerate</name>
        <dbReference type="ChEBI" id="CHEBI:58289"/>
    </ligand>
</feature>
<feature type="binding site" evidence="1">
    <location>
        <position position="391"/>
    </location>
    <ligand>
        <name>(2R)-2-phosphoglycerate</name>
        <dbReference type="ChEBI" id="CHEBI:58289"/>
    </ligand>
</feature>
<gene>
    <name evidence="1" type="primary">eno</name>
    <name type="ordered locus">Bsph_0468</name>
</gene>
<name>ENO_LYSSC</name>
<organism>
    <name type="scientific">Lysinibacillus sphaericus (strain C3-41)</name>
    <dbReference type="NCBI Taxonomy" id="444177"/>
    <lineage>
        <taxon>Bacteria</taxon>
        <taxon>Bacillati</taxon>
        <taxon>Bacillota</taxon>
        <taxon>Bacilli</taxon>
        <taxon>Bacillales</taxon>
        <taxon>Bacillaceae</taxon>
        <taxon>Lysinibacillus</taxon>
    </lineage>
</organism>
<proteinExistence type="inferred from homology"/>
<reference key="1">
    <citation type="journal article" date="2008" name="J. Bacteriol.">
        <title>Complete genome sequence of the mosquitocidal bacterium Bacillus sphaericus C3-41 and comparison with those of closely related Bacillus species.</title>
        <authorList>
            <person name="Hu X."/>
            <person name="Fan W."/>
            <person name="Han B."/>
            <person name="Liu H."/>
            <person name="Zheng D."/>
            <person name="Li Q."/>
            <person name="Dong W."/>
            <person name="Yan J."/>
            <person name="Gao M."/>
            <person name="Berry C."/>
            <person name="Yuan Z."/>
        </authorList>
    </citation>
    <scope>NUCLEOTIDE SEQUENCE [LARGE SCALE GENOMIC DNA]</scope>
    <source>
        <strain>C3-41</strain>
    </source>
</reference>